<organism>
    <name type="scientific">Xenopus laevis</name>
    <name type="common">African clawed frog</name>
    <dbReference type="NCBI Taxonomy" id="8355"/>
    <lineage>
        <taxon>Eukaryota</taxon>
        <taxon>Metazoa</taxon>
        <taxon>Chordata</taxon>
        <taxon>Craniata</taxon>
        <taxon>Vertebrata</taxon>
        <taxon>Euteleostomi</taxon>
        <taxon>Amphibia</taxon>
        <taxon>Batrachia</taxon>
        <taxon>Anura</taxon>
        <taxon>Pipoidea</taxon>
        <taxon>Pipidae</taxon>
        <taxon>Xenopodinae</taxon>
        <taxon>Xenopus</taxon>
        <taxon>Xenopus</taxon>
    </lineage>
</organism>
<evidence type="ECO:0000250" key="1"/>
<evidence type="ECO:0000255" key="2"/>
<evidence type="ECO:0000256" key="3">
    <source>
        <dbReference type="SAM" id="MobiDB-lite"/>
    </source>
</evidence>
<evidence type="ECO:0000305" key="4"/>
<name>T214B_XENLA</name>
<feature type="chain" id="PRO_0000321901" description="Transmembrane protein 214-B">
    <location>
        <begin position="1"/>
        <end position="679"/>
    </location>
</feature>
<feature type="transmembrane region" description="Helical" evidence="2">
    <location>
        <begin position="468"/>
        <end position="488"/>
    </location>
</feature>
<feature type="transmembrane region" description="Helical" evidence="2">
    <location>
        <begin position="606"/>
        <end position="626"/>
    </location>
</feature>
<feature type="region of interest" description="Disordered" evidence="3">
    <location>
        <begin position="1"/>
        <end position="94"/>
    </location>
</feature>
<feature type="compositionally biased region" description="Basic and acidic residues" evidence="3">
    <location>
        <begin position="18"/>
        <end position="30"/>
    </location>
</feature>
<feature type="glycosylation site" description="N-linked (GlcNAc...) asparagine" evidence="2">
    <location>
        <position position="70"/>
    </location>
</feature>
<feature type="glycosylation site" description="N-linked (GlcNAc...) asparagine" evidence="2">
    <location>
        <position position="298"/>
    </location>
</feature>
<feature type="glycosylation site" description="N-linked (GlcNAc...) asparagine" evidence="2">
    <location>
        <position position="322"/>
    </location>
</feature>
<reference key="1">
    <citation type="submission" date="2006-12" db="EMBL/GenBank/DDBJ databases">
        <authorList>
            <consortium name="NIH - Xenopus Gene Collection (XGC) project"/>
        </authorList>
    </citation>
    <scope>NUCLEOTIDE SEQUENCE [LARGE SCALE MRNA]</scope>
    <source>
        <tissue>Spleen</tissue>
    </source>
</reference>
<dbReference type="EMBL" id="BC129551">
    <property type="protein sequence ID" value="AAI29552.1"/>
    <property type="molecule type" value="mRNA"/>
</dbReference>
<dbReference type="RefSeq" id="NP_001090615.1">
    <property type="nucleotide sequence ID" value="NM_001097146.1"/>
</dbReference>
<dbReference type="SMR" id="A1L2I9"/>
<dbReference type="BioGRID" id="674139">
    <property type="interactions" value="1"/>
</dbReference>
<dbReference type="GlyCosmos" id="A1L2I9">
    <property type="glycosylation" value="3 sites, No reported glycans"/>
</dbReference>
<dbReference type="GeneID" id="100036861"/>
<dbReference type="KEGG" id="xla:100036861"/>
<dbReference type="AGR" id="Xenbase:XB-GENE-5827050"/>
<dbReference type="CTD" id="100036861"/>
<dbReference type="Xenbase" id="XB-GENE-5827050">
    <property type="gene designation" value="tmem214.S"/>
</dbReference>
<dbReference type="OrthoDB" id="10022292at2759"/>
<dbReference type="Proteomes" id="UP000186698">
    <property type="component" value="Chromosome 5S"/>
</dbReference>
<dbReference type="Bgee" id="100036861">
    <property type="expression patterns" value="Expressed in testis and 19 other cell types or tissues"/>
</dbReference>
<dbReference type="GO" id="GO:0005783">
    <property type="term" value="C:endoplasmic reticulum"/>
    <property type="evidence" value="ECO:0000318"/>
    <property type="project" value="GO_Central"/>
</dbReference>
<dbReference type="GO" id="GO:0005789">
    <property type="term" value="C:endoplasmic reticulum membrane"/>
    <property type="evidence" value="ECO:0007669"/>
    <property type="project" value="UniProtKB-SubCell"/>
</dbReference>
<dbReference type="GO" id="GO:0005794">
    <property type="term" value="C:Golgi apparatus"/>
    <property type="evidence" value="ECO:0000318"/>
    <property type="project" value="GO_Central"/>
</dbReference>
<dbReference type="GO" id="GO:0006915">
    <property type="term" value="P:apoptotic process"/>
    <property type="evidence" value="ECO:0007669"/>
    <property type="project" value="UniProtKB-KW"/>
</dbReference>
<dbReference type="InterPro" id="IPR019308">
    <property type="entry name" value="TMEM214"/>
</dbReference>
<dbReference type="PANTHER" id="PTHR13448">
    <property type="entry name" value="TRANSMEMBRANE PROTEIN 214"/>
    <property type="match status" value="1"/>
</dbReference>
<dbReference type="PANTHER" id="PTHR13448:SF0">
    <property type="entry name" value="TRANSMEMBRANE PROTEIN 214"/>
    <property type="match status" value="1"/>
</dbReference>
<dbReference type="Pfam" id="PF10151">
    <property type="entry name" value="TMEM214"/>
    <property type="match status" value="1"/>
</dbReference>
<protein>
    <recommendedName>
        <fullName>Transmembrane protein 214-B</fullName>
    </recommendedName>
</protein>
<sequence>MASGAPDGKWKVVKKGKKSGERREGERKALTESNVTPGGTAPIKMANTVYEMGFDRIHKKQNKEQVPPNNMSSEQPQKQQQNPGKKKPQSGDSVCKQSKFHTLECALKALDVAELQRDLEKSQNMFPENPSIWVKDLAGYLNYKLQTVKNDVLIQQSHDYPYCLINKELKGIVRSLLAKAPHVLDVMVDHCIFSMLQELDKPTGESLHGYRICIQAVLLDKPKTVTSNLPKYLELLRSHLNRPMKCLTVMWAVGQAGFTDFTEGLKVWLGLMFPVLGVKNLTPYAILYLDRLLLAHSNLTKGFGMIGPKDFFPILDFAFMPNNSLTPSQQENLRNLYPKLKVLALGATPESTLHTYFPSFLSRATPSCPAEMRKELIHSLTDCLNKDSLSFSVWRQLYTKHLSQSSLLLQHLVETWDSNSRAMRKSVRETVHSFKVTNGEFSGKGSSSKDLEACDAACQALLHKMKSGGFPWWRLIVIAFVFLFGSVLYDVRTHNSFQESTSAQILQQSGLLSVSREAWNKVSNYSLQGQSWLERNVPQYYSQAVEVLGPVLEQVWAKTQEGGAYACEKGSVLLSYAKDNLPRLIEWLHSSIPDSVFQFIEYLRELLLHLHQTYLLPAVTYLEAAVQNSWQQYVKSCNGKVTWDCVRGQVGNISHSSWTYLQNTTMTFTNWALTIISRH</sequence>
<accession>A1L2I9</accession>
<proteinExistence type="evidence at transcript level"/>
<keyword id="KW-0053">Apoptosis</keyword>
<keyword id="KW-0256">Endoplasmic reticulum</keyword>
<keyword id="KW-0325">Glycoprotein</keyword>
<keyword id="KW-0472">Membrane</keyword>
<keyword id="KW-1185">Reference proteome</keyword>
<keyword id="KW-0812">Transmembrane</keyword>
<keyword id="KW-1133">Transmembrane helix</keyword>
<comment type="function">
    <text evidence="1">Critical mediator, in cooperation with CASP4, of endoplasmic reticulum-stress induced apoptosis. Required or the activation of CASP4 following endoplasmic reticulum stress (By similarity).</text>
</comment>
<comment type="subunit">
    <text evidence="1">Constitutively interacts with CASP4; required for the localization of procaspase 4 to the ER.</text>
</comment>
<comment type="subcellular location">
    <subcellularLocation>
        <location evidence="1">Endoplasmic reticulum membrane</location>
        <topology evidence="1">Multi-pass membrane protein</topology>
    </subcellularLocation>
</comment>
<comment type="similarity">
    <text evidence="4">Belongs to the TMEM214 family.</text>
</comment>
<gene>
    <name type="primary">tmem214-b</name>
</gene>